<sequence length="457" mass="52494">MDSEKMDLFSKLPDEVISHILSSLPTKEAASTSVLAKKWRYLFAFVPSLDFNDSDFLHPQEGKREKDGILRSFMDFVDRVLALQGASPIKKFSLNVKTGVDPDRVDRWICNVLQRGVSHLALFMDFEEEYSLPYEISVSKTLVELKTGYGVDLYLWDDDMFLPMLKTLVLESVEFGRGQFQTLLPACPVLEELMLLNMEWKDRNVILSSSSLKNLKITSEDGCLGTLSFDTPNLVFLDYYDYVAEDYPIVNLKNLVEVGINLVLTADRINRARDNVWNLIHGIQNAEIFHISPVTFEVLSLSCEAMPVFKNLTTLNIRTVMQQGWQAMPLLLKNCPNLETLYLGGLLHTVTNKCGDVCDCIPRKKKGRSLMACPVNKIQIQGFRGTIREVHMIKHFLDFCPSLKEMEIIVETKEPTLFEIPKWLEIVEDTLMQYNEMSSCTINYRVLAPLYWRWTRK</sequence>
<proteinExistence type="predicted"/>
<protein>
    <recommendedName>
        <fullName>Putative F-box protein At3g58860</fullName>
    </recommendedName>
</protein>
<feature type="chain" id="PRO_0000283477" description="Putative F-box protein At3g58860">
    <location>
        <begin position="1"/>
        <end position="457"/>
    </location>
</feature>
<feature type="domain" description="F-box" evidence="1">
    <location>
        <begin position="6"/>
        <end position="54"/>
    </location>
</feature>
<evidence type="ECO:0000255" key="1">
    <source>
        <dbReference type="PROSITE-ProRule" id="PRU00080"/>
    </source>
</evidence>
<accession>Q9LXR6</accession>
<name>FB207_ARATH</name>
<gene>
    <name type="ordered locus">At3g58860</name>
    <name type="ORF">T20N10.210</name>
</gene>
<reference key="1">
    <citation type="journal article" date="2000" name="Nature">
        <title>Sequence and analysis of chromosome 3 of the plant Arabidopsis thaliana.</title>
        <authorList>
            <person name="Salanoubat M."/>
            <person name="Lemcke K."/>
            <person name="Rieger M."/>
            <person name="Ansorge W."/>
            <person name="Unseld M."/>
            <person name="Fartmann B."/>
            <person name="Valle G."/>
            <person name="Bloecker H."/>
            <person name="Perez-Alonso M."/>
            <person name="Obermaier B."/>
            <person name="Delseny M."/>
            <person name="Boutry M."/>
            <person name="Grivell L.A."/>
            <person name="Mache R."/>
            <person name="Puigdomenech P."/>
            <person name="De Simone V."/>
            <person name="Choisne N."/>
            <person name="Artiguenave F."/>
            <person name="Robert C."/>
            <person name="Brottier P."/>
            <person name="Wincker P."/>
            <person name="Cattolico L."/>
            <person name="Weissenbach J."/>
            <person name="Saurin W."/>
            <person name="Quetier F."/>
            <person name="Schaefer M."/>
            <person name="Mueller-Auer S."/>
            <person name="Gabel C."/>
            <person name="Fuchs M."/>
            <person name="Benes V."/>
            <person name="Wurmbach E."/>
            <person name="Drzonek H."/>
            <person name="Erfle H."/>
            <person name="Jordan N."/>
            <person name="Bangert S."/>
            <person name="Wiedelmann R."/>
            <person name="Kranz H."/>
            <person name="Voss H."/>
            <person name="Holland R."/>
            <person name="Brandt P."/>
            <person name="Nyakatura G."/>
            <person name="Vezzi A."/>
            <person name="D'Angelo M."/>
            <person name="Pallavicini A."/>
            <person name="Toppo S."/>
            <person name="Simionati B."/>
            <person name="Conrad A."/>
            <person name="Hornischer K."/>
            <person name="Kauer G."/>
            <person name="Loehnert T.-H."/>
            <person name="Nordsiek G."/>
            <person name="Reichelt J."/>
            <person name="Scharfe M."/>
            <person name="Schoen O."/>
            <person name="Bargues M."/>
            <person name="Terol J."/>
            <person name="Climent J."/>
            <person name="Navarro P."/>
            <person name="Collado C."/>
            <person name="Perez-Perez A."/>
            <person name="Ottenwaelder B."/>
            <person name="Duchemin D."/>
            <person name="Cooke R."/>
            <person name="Laudie M."/>
            <person name="Berger-Llauro C."/>
            <person name="Purnelle B."/>
            <person name="Masuy D."/>
            <person name="de Haan M."/>
            <person name="Maarse A.C."/>
            <person name="Alcaraz J.-P."/>
            <person name="Cottet A."/>
            <person name="Casacuberta E."/>
            <person name="Monfort A."/>
            <person name="Argiriou A."/>
            <person name="Flores M."/>
            <person name="Liguori R."/>
            <person name="Vitale D."/>
            <person name="Mannhaupt G."/>
            <person name="Haase D."/>
            <person name="Schoof H."/>
            <person name="Rudd S."/>
            <person name="Zaccaria P."/>
            <person name="Mewes H.-W."/>
            <person name="Mayer K.F.X."/>
            <person name="Kaul S."/>
            <person name="Town C.D."/>
            <person name="Koo H.L."/>
            <person name="Tallon L.J."/>
            <person name="Jenkins J."/>
            <person name="Rooney T."/>
            <person name="Rizzo M."/>
            <person name="Walts A."/>
            <person name="Utterback T."/>
            <person name="Fujii C.Y."/>
            <person name="Shea T.P."/>
            <person name="Creasy T.H."/>
            <person name="Haas B."/>
            <person name="Maiti R."/>
            <person name="Wu D."/>
            <person name="Peterson J."/>
            <person name="Van Aken S."/>
            <person name="Pai G."/>
            <person name="Militscher J."/>
            <person name="Sellers P."/>
            <person name="Gill J.E."/>
            <person name="Feldblyum T.V."/>
            <person name="Preuss D."/>
            <person name="Lin X."/>
            <person name="Nierman W.C."/>
            <person name="Salzberg S.L."/>
            <person name="White O."/>
            <person name="Venter J.C."/>
            <person name="Fraser C.M."/>
            <person name="Kaneko T."/>
            <person name="Nakamura Y."/>
            <person name="Sato S."/>
            <person name="Kato T."/>
            <person name="Asamizu E."/>
            <person name="Sasamoto S."/>
            <person name="Kimura T."/>
            <person name="Idesawa K."/>
            <person name="Kawashima K."/>
            <person name="Kishida Y."/>
            <person name="Kiyokawa C."/>
            <person name="Kohara M."/>
            <person name="Matsumoto M."/>
            <person name="Matsuno A."/>
            <person name="Muraki A."/>
            <person name="Nakayama S."/>
            <person name="Nakazaki N."/>
            <person name="Shinpo S."/>
            <person name="Takeuchi C."/>
            <person name="Wada T."/>
            <person name="Watanabe A."/>
            <person name="Yamada M."/>
            <person name="Yasuda M."/>
            <person name="Tabata S."/>
        </authorList>
    </citation>
    <scope>NUCLEOTIDE SEQUENCE [LARGE SCALE GENOMIC DNA]</scope>
    <source>
        <strain>cv. Columbia</strain>
    </source>
</reference>
<reference key="2">
    <citation type="journal article" date="2017" name="Plant J.">
        <title>Araport11: a complete reannotation of the Arabidopsis thaliana reference genome.</title>
        <authorList>
            <person name="Cheng C.Y."/>
            <person name="Krishnakumar V."/>
            <person name="Chan A.P."/>
            <person name="Thibaud-Nissen F."/>
            <person name="Schobel S."/>
            <person name="Town C.D."/>
        </authorList>
    </citation>
    <scope>GENOME REANNOTATION</scope>
    <source>
        <strain>cv. Columbia</strain>
    </source>
</reference>
<keyword id="KW-1185">Reference proteome</keyword>
<dbReference type="EMBL" id="AL353032">
    <property type="protein sequence ID" value="CAB88303.1"/>
    <property type="molecule type" value="Genomic_DNA"/>
</dbReference>
<dbReference type="EMBL" id="CP002686">
    <property type="protein sequence ID" value="AEE79841.1"/>
    <property type="molecule type" value="Genomic_DNA"/>
</dbReference>
<dbReference type="PIR" id="T49169">
    <property type="entry name" value="T49169"/>
</dbReference>
<dbReference type="RefSeq" id="NP_191445.1">
    <property type="nucleotide sequence ID" value="NM_115748.2"/>
</dbReference>
<dbReference type="FunCoup" id="Q9LXR6">
    <property type="interactions" value="45"/>
</dbReference>
<dbReference type="PaxDb" id="3702-AT3G58860.1"/>
<dbReference type="ProteomicsDB" id="230970"/>
<dbReference type="EnsemblPlants" id="AT3G58860.1">
    <property type="protein sequence ID" value="AT3G58860.1"/>
    <property type="gene ID" value="AT3G58860"/>
</dbReference>
<dbReference type="GeneID" id="825055"/>
<dbReference type="Gramene" id="AT3G58860.1">
    <property type="protein sequence ID" value="AT3G58860.1"/>
    <property type="gene ID" value="AT3G58860"/>
</dbReference>
<dbReference type="KEGG" id="ath:AT3G58860"/>
<dbReference type="Araport" id="AT3G58860"/>
<dbReference type="TAIR" id="AT3G58860"/>
<dbReference type="HOGENOM" id="CLU_010721_7_1_1"/>
<dbReference type="InParanoid" id="Q9LXR6"/>
<dbReference type="OMA" id="IKSVMIQ"/>
<dbReference type="PhylomeDB" id="Q9LXR6"/>
<dbReference type="PRO" id="PR:Q9LXR6"/>
<dbReference type="Proteomes" id="UP000006548">
    <property type="component" value="Chromosome 3"/>
</dbReference>
<dbReference type="ExpressionAtlas" id="Q9LXR6">
    <property type="expression patterns" value="baseline and differential"/>
</dbReference>
<dbReference type="CDD" id="cd22160">
    <property type="entry name" value="F-box_AtFBL13-like"/>
    <property type="match status" value="1"/>
</dbReference>
<dbReference type="Gene3D" id="1.20.1280.50">
    <property type="match status" value="1"/>
</dbReference>
<dbReference type="Gene3D" id="3.80.10.10">
    <property type="entry name" value="Ribonuclease Inhibitor"/>
    <property type="match status" value="1"/>
</dbReference>
<dbReference type="InterPro" id="IPR036047">
    <property type="entry name" value="F-box-like_dom_sf"/>
</dbReference>
<dbReference type="InterPro" id="IPR053781">
    <property type="entry name" value="F-box_AtFBL13-like"/>
</dbReference>
<dbReference type="InterPro" id="IPR001810">
    <property type="entry name" value="F-box_dom"/>
</dbReference>
<dbReference type="InterPro" id="IPR006566">
    <property type="entry name" value="FBD"/>
</dbReference>
<dbReference type="InterPro" id="IPR055294">
    <property type="entry name" value="FBL60-like"/>
</dbReference>
<dbReference type="InterPro" id="IPR032675">
    <property type="entry name" value="LRR_dom_sf"/>
</dbReference>
<dbReference type="InterPro" id="IPR055411">
    <property type="entry name" value="LRR_FXL15/At3g58940/PEG3-like"/>
</dbReference>
<dbReference type="PANTHER" id="PTHR31293">
    <property type="entry name" value="RNI-LIKE SUPERFAMILY PROTEIN"/>
    <property type="match status" value="1"/>
</dbReference>
<dbReference type="PANTHER" id="PTHR31293:SF16">
    <property type="entry name" value="RNI-LIKE SUPERFAMILY PROTEIN"/>
    <property type="match status" value="1"/>
</dbReference>
<dbReference type="Pfam" id="PF00646">
    <property type="entry name" value="F-box"/>
    <property type="match status" value="1"/>
</dbReference>
<dbReference type="Pfam" id="PF24758">
    <property type="entry name" value="LRR_At5g56370"/>
    <property type="match status" value="1"/>
</dbReference>
<dbReference type="SMART" id="SM00579">
    <property type="entry name" value="FBD"/>
    <property type="match status" value="1"/>
</dbReference>
<dbReference type="SUPFAM" id="SSF81383">
    <property type="entry name" value="F-box domain"/>
    <property type="match status" value="1"/>
</dbReference>
<dbReference type="SUPFAM" id="SSF52047">
    <property type="entry name" value="RNI-like"/>
    <property type="match status" value="1"/>
</dbReference>
<dbReference type="PROSITE" id="PS50181">
    <property type="entry name" value="FBOX"/>
    <property type="match status" value="1"/>
</dbReference>
<organism>
    <name type="scientific">Arabidopsis thaliana</name>
    <name type="common">Mouse-ear cress</name>
    <dbReference type="NCBI Taxonomy" id="3702"/>
    <lineage>
        <taxon>Eukaryota</taxon>
        <taxon>Viridiplantae</taxon>
        <taxon>Streptophyta</taxon>
        <taxon>Embryophyta</taxon>
        <taxon>Tracheophyta</taxon>
        <taxon>Spermatophyta</taxon>
        <taxon>Magnoliopsida</taxon>
        <taxon>eudicotyledons</taxon>
        <taxon>Gunneridae</taxon>
        <taxon>Pentapetalae</taxon>
        <taxon>rosids</taxon>
        <taxon>malvids</taxon>
        <taxon>Brassicales</taxon>
        <taxon>Brassicaceae</taxon>
        <taxon>Camelineae</taxon>
        <taxon>Arabidopsis</taxon>
    </lineage>
</organism>